<name>GCR_PAROL</name>
<organism>
    <name type="scientific">Paralichthys olivaceus</name>
    <name type="common">Bastard halibut</name>
    <name type="synonym">Hippoglossus olivaceus</name>
    <dbReference type="NCBI Taxonomy" id="8255"/>
    <lineage>
        <taxon>Eukaryota</taxon>
        <taxon>Metazoa</taxon>
        <taxon>Chordata</taxon>
        <taxon>Craniata</taxon>
        <taxon>Vertebrata</taxon>
        <taxon>Euteleostomi</taxon>
        <taxon>Actinopterygii</taxon>
        <taxon>Neopterygii</taxon>
        <taxon>Teleostei</taxon>
        <taxon>Neoteleostei</taxon>
        <taxon>Acanthomorphata</taxon>
        <taxon>Carangaria</taxon>
        <taxon>Pleuronectiformes</taxon>
        <taxon>Pleuronectoidei</taxon>
        <taxon>Paralichthyidae</taxon>
        <taxon>Paralichthys</taxon>
    </lineage>
</organism>
<reference key="1">
    <citation type="submission" date="1998-04" db="EMBL/GenBank/DDBJ databases">
        <title>Japanese flounder mRNA for glucocorticoid receptor, complete cds.</title>
        <authorList>
            <person name="Tokuda Y."/>
        </authorList>
    </citation>
    <scope>NUCLEOTIDE SEQUENCE [MRNA]</scope>
    <source>
        <tissue>Liver</tissue>
    </source>
</reference>
<evidence type="ECO:0000250" key="1">
    <source>
        <dbReference type="UniProtKB" id="P04150"/>
    </source>
</evidence>
<evidence type="ECO:0000250" key="2">
    <source>
        <dbReference type="UniProtKB" id="P06537"/>
    </source>
</evidence>
<evidence type="ECO:0000255" key="3">
    <source>
        <dbReference type="PROSITE-ProRule" id="PRU00407"/>
    </source>
</evidence>
<evidence type="ECO:0000255" key="4">
    <source>
        <dbReference type="PROSITE-ProRule" id="PRU01189"/>
    </source>
</evidence>
<evidence type="ECO:0000256" key="5">
    <source>
        <dbReference type="SAM" id="MobiDB-lite"/>
    </source>
</evidence>
<evidence type="ECO:0000305" key="6"/>
<comment type="function">
    <text evidence="1 2">Receptor for glucocorticoids (GC). Has a dual mode of action: as a transcription factor that binds to glucocorticoid response elements (GRE), both for nuclear and mitochondrial DNA, and as a modulator of other transcription factors. Affects inflammatory responses, cellular proliferation and differentiation in target tissues. Involved in chromatin remodeling. Plays a role in rapid mRNA degradation by binding to the 5' UTR of target mRNAs and interacting with PNRC2 in a ligand-dependent manner which recruits the RNA helicase UPF1 and the mRNA-decapping enzyme DCP1A, leading to RNA decay. Could act as a coactivator for STAT5-dependent transcription upon growth hormone (GH) stimulation and could reveal an essential role of hepatic GR in the control of body growth. Mediates glucocorticoid-induced apoptosis. Promotes accurate chromosome segregation during mitosis. May act as a tumor suppressor. May play a negative role in adipogenesis through the regulation of lipolytic and antilipogenic gene expression.</text>
</comment>
<comment type="subunit">
    <text evidence="1">Heteromultimeric cytoplasmic complex with HSP90. Upon ligand binding the complex undergoes a conformation change and moves to the nucleus, where it dissociates. Binds to DNA as a homodimer, and as heterodimer with NR3C2. Interaction with numerous other transcription factors modulates transcription activation (By similarity).</text>
</comment>
<comment type="subcellular location">
    <subcellularLocation>
        <location evidence="1">Cytoplasm</location>
    </subcellularLocation>
    <subcellularLocation>
        <location evidence="1">Nucleus</location>
    </subcellularLocation>
    <subcellularLocation>
        <location evidence="1">Mitochondrion</location>
    </subcellularLocation>
    <subcellularLocation>
        <location evidence="1">Cytoplasm</location>
        <location evidence="1">Cytoskeleton</location>
        <location evidence="1">Spindle</location>
    </subcellularLocation>
    <subcellularLocation>
        <location evidence="1">Cytoplasm</location>
        <location evidence="1">Cytoskeleton</location>
        <location evidence="1">Microtubule organizing center</location>
        <location evidence="1">Centrosome</location>
    </subcellularLocation>
    <text evidence="1">After ligand activation, translocates from the cytoplasm to the nucleus.</text>
</comment>
<comment type="domain">
    <text evidence="1">Composed of three domains: a modulating N-terminal domain, a DNA-binding domain and a C-terminal ligand-binding domain. The ligand-binding domain is required for correct chromosome segregation during mitosis although ligand binding is not required.</text>
</comment>
<comment type="similarity">
    <text evidence="6">Belongs to the nuclear hormone receptor family. NR3 subfamily.</text>
</comment>
<dbReference type="EMBL" id="AB013444">
    <property type="protein sequence ID" value="BAA25997.1"/>
    <property type="molecule type" value="mRNA"/>
</dbReference>
<dbReference type="SMR" id="O73673"/>
<dbReference type="KEGG" id="pov:109635852"/>
<dbReference type="OrthoDB" id="12743at7898"/>
<dbReference type="GO" id="GO:0005813">
    <property type="term" value="C:centrosome"/>
    <property type="evidence" value="ECO:0007669"/>
    <property type="project" value="UniProtKB-SubCell"/>
</dbReference>
<dbReference type="GO" id="GO:0005737">
    <property type="term" value="C:cytoplasm"/>
    <property type="evidence" value="ECO:0000250"/>
    <property type="project" value="UniProtKB"/>
</dbReference>
<dbReference type="GO" id="GO:0005739">
    <property type="term" value="C:mitochondrion"/>
    <property type="evidence" value="ECO:0007669"/>
    <property type="project" value="UniProtKB-SubCell"/>
</dbReference>
<dbReference type="GO" id="GO:0016607">
    <property type="term" value="C:nuclear speck"/>
    <property type="evidence" value="ECO:0000250"/>
    <property type="project" value="UniProtKB"/>
</dbReference>
<dbReference type="GO" id="GO:0005634">
    <property type="term" value="C:nucleus"/>
    <property type="evidence" value="ECO:0000250"/>
    <property type="project" value="UniProtKB"/>
</dbReference>
<dbReference type="GO" id="GO:0005819">
    <property type="term" value="C:spindle"/>
    <property type="evidence" value="ECO:0007669"/>
    <property type="project" value="UniProtKB-SubCell"/>
</dbReference>
<dbReference type="GO" id="GO:0003700">
    <property type="term" value="F:DNA-binding transcription factor activity"/>
    <property type="evidence" value="ECO:0000250"/>
    <property type="project" value="UniProtKB"/>
</dbReference>
<dbReference type="GO" id="GO:0004883">
    <property type="term" value="F:nuclear glucocorticoid receptor activity"/>
    <property type="evidence" value="ECO:0007669"/>
    <property type="project" value="InterPro"/>
</dbReference>
<dbReference type="GO" id="GO:0004879">
    <property type="term" value="F:nuclear receptor activity"/>
    <property type="evidence" value="ECO:0000250"/>
    <property type="project" value="UniProtKB"/>
</dbReference>
<dbReference type="GO" id="GO:0043565">
    <property type="term" value="F:sequence-specific DNA binding"/>
    <property type="evidence" value="ECO:0007669"/>
    <property type="project" value="InterPro"/>
</dbReference>
<dbReference type="GO" id="GO:0005496">
    <property type="term" value="F:steroid binding"/>
    <property type="evidence" value="ECO:0000250"/>
    <property type="project" value="UniProtKB"/>
</dbReference>
<dbReference type="GO" id="GO:1990239">
    <property type="term" value="F:steroid hormone binding"/>
    <property type="evidence" value="ECO:0000250"/>
    <property type="project" value="UniProtKB"/>
</dbReference>
<dbReference type="GO" id="GO:0008270">
    <property type="term" value="F:zinc ion binding"/>
    <property type="evidence" value="ECO:0007669"/>
    <property type="project" value="UniProtKB-KW"/>
</dbReference>
<dbReference type="GO" id="GO:0071385">
    <property type="term" value="P:cellular response to glucocorticoid stimulus"/>
    <property type="evidence" value="ECO:0000250"/>
    <property type="project" value="UniProtKB"/>
</dbReference>
<dbReference type="GO" id="GO:0071383">
    <property type="term" value="P:cellular response to steroid hormone stimulus"/>
    <property type="evidence" value="ECO:0000250"/>
    <property type="project" value="UniProtKB"/>
</dbReference>
<dbReference type="GO" id="GO:0006325">
    <property type="term" value="P:chromatin organization"/>
    <property type="evidence" value="ECO:0007669"/>
    <property type="project" value="UniProtKB-KW"/>
</dbReference>
<dbReference type="GO" id="GO:0045944">
    <property type="term" value="P:positive regulation of transcription by RNA polymerase II"/>
    <property type="evidence" value="ECO:0000250"/>
    <property type="project" value="UniProtKB"/>
</dbReference>
<dbReference type="CDD" id="cd07172">
    <property type="entry name" value="NR_DBD_GR_PR"/>
    <property type="match status" value="1"/>
</dbReference>
<dbReference type="CDD" id="cd07076">
    <property type="entry name" value="NR_LBD_GR"/>
    <property type="match status" value="1"/>
</dbReference>
<dbReference type="FunFam" id="1.10.565.10:FF:000004">
    <property type="entry name" value="Androgen receptor variant"/>
    <property type="match status" value="1"/>
</dbReference>
<dbReference type="FunFam" id="3.30.50.10:FF:000047">
    <property type="entry name" value="glucocorticoid receptor isoform X1"/>
    <property type="match status" value="1"/>
</dbReference>
<dbReference type="Gene3D" id="3.30.50.10">
    <property type="entry name" value="Erythroid Transcription Factor GATA-1, subunit A"/>
    <property type="match status" value="1"/>
</dbReference>
<dbReference type="Gene3D" id="1.10.565.10">
    <property type="entry name" value="Retinoid X Receptor"/>
    <property type="match status" value="1"/>
</dbReference>
<dbReference type="InterPro" id="IPR001409">
    <property type="entry name" value="Glcrtcd_rcpt"/>
</dbReference>
<dbReference type="InterPro" id="IPR035500">
    <property type="entry name" value="NHR-like_dom_sf"/>
</dbReference>
<dbReference type="InterPro" id="IPR000536">
    <property type="entry name" value="Nucl_hrmn_rcpt_lig-bd"/>
</dbReference>
<dbReference type="InterPro" id="IPR050200">
    <property type="entry name" value="Nuclear_hormone_rcpt_NR3"/>
</dbReference>
<dbReference type="InterPro" id="IPR001723">
    <property type="entry name" value="Nuclear_hrmn_rcpt"/>
</dbReference>
<dbReference type="InterPro" id="IPR001628">
    <property type="entry name" value="Znf_hrmn_rcpt"/>
</dbReference>
<dbReference type="InterPro" id="IPR013088">
    <property type="entry name" value="Znf_NHR/GATA"/>
</dbReference>
<dbReference type="PANTHER" id="PTHR48092">
    <property type="entry name" value="KNIRPS-RELATED PROTEIN-RELATED"/>
    <property type="match status" value="1"/>
</dbReference>
<dbReference type="Pfam" id="PF02155">
    <property type="entry name" value="GCR"/>
    <property type="match status" value="1"/>
</dbReference>
<dbReference type="Pfam" id="PF00104">
    <property type="entry name" value="Hormone_recep"/>
    <property type="match status" value="1"/>
</dbReference>
<dbReference type="Pfam" id="PF00105">
    <property type="entry name" value="zf-C4"/>
    <property type="match status" value="1"/>
</dbReference>
<dbReference type="PRINTS" id="PR00398">
    <property type="entry name" value="STRDHORMONER"/>
</dbReference>
<dbReference type="PRINTS" id="PR00047">
    <property type="entry name" value="STROIDFINGER"/>
</dbReference>
<dbReference type="SMART" id="SM00430">
    <property type="entry name" value="HOLI"/>
    <property type="match status" value="1"/>
</dbReference>
<dbReference type="SMART" id="SM00399">
    <property type="entry name" value="ZnF_C4"/>
    <property type="match status" value="1"/>
</dbReference>
<dbReference type="SUPFAM" id="SSF57716">
    <property type="entry name" value="Glucocorticoid receptor-like (DNA-binding domain)"/>
    <property type="match status" value="1"/>
</dbReference>
<dbReference type="SUPFAM" id="SSF48508">
    <property type="entry name" value="Nuclear receptor ligand-binding domain"/>
    <property type="match status" value="1"/>
</dbReference>
<dbReference type="PROSITE" id="PS51843">
    <property type="entry name" value="NR_LBD"/>
    <property type="match status" value="1"/>
</dbReference>
<dbReference type="PROSITE" id="PS00031">
    <property type="entry name" value="NUCLEAR_REC_DBD_1"/>
    <property type="match status" value="1"/>
</dbReference>
<dbReference type="PROSITE" id="PS51030">
    <property type="entry name" value="NUCLEAR_REC_DBD_2"/>
    <property type="match status" value="1"/>
</dbReference>
<keyword id="KW-0156">Chromatin regulator</keyword>
<keyword id="KW-0963">Cytoplasm</keyword>
<keyword id="KW-0206">Cytoskeleton</keyword>
<keyword id="KW-0238">DNA-binding</keyword>
<keyword id="KW-0446">Lipid-binding</keyword>
<keyword id="KW-0479">Metal-binding</keyword>
<keyword id="KW-0496">Mitochondrion</keyword>
<keyword id="KW-0539">Nucleus</keyword>
<keyword id="KW-0675">Receptor</keyword>
<keyword id="KW-0754">Steroid-binding</keyword>
<keyword id="KW-0804">Transcription</keyword>
<keyword id="KW-0805">Transcription regulation</keyword>
<keyword id="KW-0862">Zinc</keyword>
<keyword id="KW-0863">Zinc-finger</keyword>
<accession>O73673</accession>
<sequence>MDQGGLKRNCNRDDSLTFGETAVGVGSDTGDTAGSLLQPAAMHLPSPSSLPQLTVAPNGGAGTKDQGEFGGLFESPRGQCEGSEMKEGKIIRLQKRKHHLDIGMFNMEDNLSLLNQNISDLNRTSTSVISTSDTSVLGKLPLPNLFPQHIKQEGGFSLEKELGTYGGHTGGGPCDLDGNSGHLIEDTEIWQDLDLPNSLPEISDFELDSEVAHLDNILHDSSGGCGPDGSLLKETKVLVGNGGNCTDVNGTDQQHPLQHHQHQQQQHRHLLQHQQHQLHHQHQQPPSLLSSVMIKEEKDHDNSFIHIRTPGVVKQEKQENGSFCQSQCLQSSMSSLHGGGPMSSTMGAGAVPGYHYKASPSSTVGLQDQKPFGIFSNLPAVAESWTRGGRFGEPSGIQRGNDGLPSAAMSPFSVSFSSSSPRTGENSSSAVPGLSKPSGPTHKICLVCSDEASGCHYGVVTCGSCKVFFKRAVEGWRARQNTDGQHNYLCAGRNDCIIDKIRRKNCPACRFRKCLQAGMNLEARKNKKLIKMKVHRPTGSAEPISNMPVPVIPRMPQLVPTMLSVLKAIEPEIIYSGYDSTLPDTSTRLMTTLNRLGGQQVISAVKWAKSLPGFRNLHLDDQMTLLQCSWLFLMSFSLGWRSYEQCNGNMLCFAPDLVINKERMKLPFMTDQCEQMLKICNEFVRLQVSYDEYLCMKVLLLLSTVPKDGLKSQAVFDEIRMTYIKELGKAIVKREENASQNWQRFYQLTKLLDSMQEMVEGLLQICFYTFVNKTLSVEFPEMLAEIITNQIPKFKDGSVKPLLFHQK</sequence>
<protein>
    <recommendedName>
        <fullName>Glucocorticoid receptor</fullName>
        <shortName>GR</shortName>
    </recommendedName>
    <alternativeName>
        <fullName>Nuclear receptor subfamily 3 group C member 1</fullName>
    </alternativeName>
</protein>
<feature type="chain" id="PRO_0000053680" description="Glucocorticoid receptor">
    <location>
        <begin position="1"/>
        <end position="807"/>
    </location>
</feature>
<feature type="domain" description="NR LBD" evidence="4">
    <location>
        <begin position="554"/>
        <end position="788"/>
    </location>
</feature>
<feature type="DNA-binding region" description="Nuclear receptor" evidence="3">
    <location>
        <begin position="445"/>
        <end position="519"/>
    </location>
</feature>
<feature type="zinc finger region" description="NR C4-type" evidence="3">
    <location>
        <begin position="445"/>
        <end position="465"/>
    </location>
</feature>
<feature type="zinc finger region" description="NR C4-type" evidence="3">
    <location>
        <begin position="490"/>
        <end position="514"/>
    </location>
</feature>
<feature type="region of interest" description="Modulating">
    <location>
        <begin position="1"/>
        <end position="444"/>
    </location>
</feature>
<feature type="region of interest" description="Disordered" evidence="5">
    <location>
        <begin position="1"/>
        <end position="47"/>
    </location>
</feature>
<feature type="region of interest" description="Disordered" evidence="5">
    <location>
        <begin position="246"/>
        <end position="284"/>
    </location>
</feature>
<feature type="region of interest" description="Disordered" evidence="5">
    <location>
        <begin position="412"/>
        <end position="438"/>
    </location>
</feature>
<feature type="region of interest" description="Hinge">
    <location>
        <begin position="520"/>
        <end position="553"/>
    </location>
</feature>
<feature type="compositionally biased region" description="Basic residues" evidence="5">
    <location>
        <begin position="257"/>
        <end position="282"/>
    </location>
</feature>
<feature type="compositionally biased region" description="Low complexity" evidence="5">
    <location>
        <begin position="412"/>
        <end position="421"/>
    </location>
</feature>
<gene>
    <name type="primary">nr3c1</name>
    <name type="synonym">grl</name>
</gene>
<proteinExistence type="evidence at transcript level"/>